<dbReference type="EC" id="7.1.1.-" evidence="2"/>
<dbReference type="EMBL" id="CP000143">
    <property type="protein sequence ID" value="ABA78674.2"/>
    <property type="molecule type" value="Genomic_DNA"/>
</dbReference>
<dbReference type="RefSeq" id="YP_352575.2">
    <property type="nucleotide sequence ID" value="NC_007493.2"/>
</dbReference>
<dbReference type="SMR" id="Q3J3G0"/>
<dbReference type="STRING" id="272943.RSP_2513"/>
<dbReference type="EnsemblBacteria" id="ABA78674">
    <property type="protein sequence ID" value="ABA78674"/>
    <property type="gene ID" value="RSP_2513"/>
</dbReference>
<dbReference type="KEGG" id="rsp:RSP_2513"/>
<dbReference type="PATRIC" id="fig|272943.9.peg.1434"/>
<dbReference type="eggNOG" id="COG0377">
    <property type="taxonomic scope" value="Bacteria"/>
</dbReference>
<dbReference type="OrthoDB" id="9786737at2"/>
<dbReference type="Proteomes" id="UP000002703">
    <property type="component" value="Chromosome 1"/>
</dbReference>
<dbReference type="GO" id="GO:0005886">
    <property type="term" value="C:plasma membrane"/>
    <property type="evidence" value="ECO:0007669"/>
    <property type="project" value="UniProtKB-SubCell"/>
</dbReference>
<dbReference type="GO" id="GO:0045271">
    <property type="term" value="C:respiratory chain complex I"/>
    <property type="evidence" value="ECO:0007669"/>
    <property type="project" value="TreeGrafter"/>
</dbReference>
<dbReference type="GO" id="GO:0051539">
    <property type="term" value="F:4 iron, 4 sulfur cluster binding"/>
    <property type="evidence" value="ECO:0007669"/>
    <property type="project" value="UniProtKB-KW"/>
</dbReference>
<dbReference type="GO" id="GO:0005506">
    <property type="term" value="F:iron ion binding"/>
    <property type="evidence" value="ECO:0007669"/>
    <property type="project" value="UniProtKB-UniRule"/>
</dbReference>
<dbReference type="GO" id="GO:0008137">
    <property type="term" value="F:NADH dehydrogenase (ubiquinone) activity"/>
    <property type="evidence" value="ECO:0007669"/>
    <property type="project" value="InterPro"/>
</dbReference>
<dbReference type="GO" id="GO:0050136">
    <property type="term" value="F:NADH:ubiquinone reductase (non-electrogenic) activity"/>
    <property type="evidence" value="ECO:0007669"/>
    <property type="project" value="UniProtKB-UniRule"/>
</dbReference>
<dbReference type="GO" id="GO:0048038">
    <property type="term" value="F:quinone binding"/>
    <property type="evidence" value="ECO:0007669"/>
    <property type="project" value="UniProtKB-KW"/>
</dbReference>
<dbReference type="GO" id="GO:0009060">
    <property type="term" value="P:aerobic respiration"/>
    <property type="evidence" value="ECO:0007669"/>
    <property type="project" value="TreeGrafter"/>
</dbReference>
<dbReference type="GO" id="GO:0015990">
    <property type="term" value="P:electron transport coupled proton transport"/>
    <property type="evidence" value="ECO:0007669"/>
    <property type="project" value="TreeGrafter"/>
</dbReference>
<dbReference type="FunFam" id="3.40.50.12280:FF:000001">
    <property type="entry name" value="NADH-quinone oxidoreductase subunit B 2"/>
    <property type="match status" value="1"/>
</dbReference>
<dbReference type="Gene3D" id="3.40.50.12280">
    <property type="match status" value="1"/>
</dbReference>
<dbReference type="HAMAP" id="MF_01356">
    <property type="entry name" value="NDH1_NuoB"/>
    <property type="match status" value="1"/>
</dbReference>
<dbReference type="InterPro" id="IPR006137">
    <property type="entry name" value="NADH_UbQ_OxRdtase-like_20kDa"/>
</dbReference>
<dbReference type="InterPro" id="IPR006138">
    <property type="entry name" value="NADH_UQ_OxRdtase_20Kd_su"/>
</dbReference>
<dbReference type="NCBIfam" id="TIGR01957">
    <property type="entry name" value="nuoB_fam"/>
    <property type="match status" value="1"/>
</dbReference>
<dbReference type="NCBIfam" id="NF005012">
    <property type="entry name" value="PRK06411.1"/>
    <property type="match status" value="1"/>
</dbReference>
<dbReference type="PANTHER" id="PTHR11995">
    <property type="entry name" value="NADH DEHYDROGENASE"/>
    <property type="match status" value="1"/>
</dbReference>
<dbReference type="PANTHER" id="PTHR11995:SF14">
    <property type="entry name" value="NADH DEHYDROGENASE [UBIQUINONE] IRON-SULFUR PROTEIN 7, MITOCHONDRIAL"/>
    <property type="match status" value="1"/>
</dbReference>
<dbReference type="Pfam" id="PF01058">
    <property type="entry name" value="Oxidored_q6"/>
    <property type="match status" value="1"/>
</dbReference>
<dbReference type="SUPFAM" id="SSF56770">
    <property type="entry name" value="HydA/Nqo6-like"/>
    <property type="match status" value="1"/>
</dbReference>
<dbReference type="PROSITE" id="PS01150">
    <property type="entry name" value="COMPLEX1_20K"/>
    <property type="match status" value="1"/>
</dbReference>
<sequence length="176" mass="19641">MAMTGLNTAGSDRDYDTQSLNRELQDKGFLLTTTEDLINWARTGSLHWMTFGLACCAVEMMHTSMPRYDVERFGVAPRASPRQSDVMIVAGTLTNKMAPALRKVYDQMPEPRYVISMGSCANGGGYYHYSYSVVRGCDRIVPVDIYVPGCPPTAEALLYGILQLQRKIRRTGTITR</sequence>
<accession>Q3J3G0</accession>
<feature type="chain" id="PRO_0000358466" description="NADH-quinone oxidoreductase subunit B 1">
    <location>
        <begin position="1"/>
        <end position="176"/>
    </location>
</feature>
<feature type="binding site" evidence="2">
    <location>
        <position position="55"/>
    </location>
    <ligand>
        <name>[4Fe-4S] cluster</name>
        <dbReference type="ChEBI" id="CHEBI:49883"/>
    </ligand>
</feature>
<feature type="binding site" evidence="2">
    <location>
        <position position="56"/>
    </location>
    <ligand>
        <name>[4Fe-4S] cluster</name>
        <dbReference type="ChEBI" id="CHEBI:49883"/>
    </ligand>
</feature>
<feature type="binding site" evidence="2">
    <location>
        <position position="120"/>
    </location>
    <ligand>
        <name>[4Fe-4S] cluster</name>
        <dbReference type="ChEBI" id="CHEBI:49883"/>
    </ligand>
</feature>
<feature type="binding site" evidence="2">
    <location>
        <position position="150"/>
    </location>
    <ligand>
        <name>[4Fe-4S] cluster</name>
        <dbReference type="ChEBI" id="CHEBI:49883"/>
    </ligand>
</feature>
<proteinExistence type="inferred from homology"/>
<gene>
    <name evidence="2" type="primary">nuoB1</name>
    <name type="ordered locus">RHOS4_11060</name>
    <name type="ORF">RSP_2513</name>
</gene>
<reference key="1">
    <citation type="submission" date="2005-09" db="EMBL/GenBank/DDBJ databases">
        <title>Complete sequence of chromosome 1 of Rhodobacter sphaeroides 2.4.1.</title>
        <authorList>
            <person name="Copeland A."/>
            <person name="Lucas S."/>
            <person name="Lapidus A."/>
            <person name="Barry K."/>
            <person name="Detter J.C."/>
            <person name="Glavina T."/>
            <person name="Hammon N."/>
            <person name="Israni S."/>
            <person name="Pitluck S."/>
            <person name="Richardson P."/>
            <person name="Mackenzie C."/>
            <person name="Choudhary M."/>
            <person name="Larimer F."/>
            <person name="Hauser L.J."/>
            <person name="Land M."/>
            <person name="Donohue T.J."/>
            <person name="Kaplan S."/>
        </authorList>
    </citation>
    <scope>NUCLEOTIDE SEQUENCE [LARGE SCALE GENOMIC DNA]</scope>
    <source>
        <strain>ATCC 17023 / DSM 158 / JCM 6121 / CCUG 31486 / LMG 2827 / NBRC 12203 / NCIMB 8253 / ATH 2.4.1.</strain>
    </source>
</reference>
<evidence type="ECO:0000250" key="1"/>
<evidence type="ECO:0000255" key="2">
    <source>
        <dbReference type="HAMAP-Rule" id="MF_01356"/>
    </source>
</evidence>
<protein>
    <recommendedName>
        <fullName evidence="2">NADH-quinone oxidoreductase subunit B 1</fullName>
        <ecNumber evidence="2">7.1.1.-</ecNumber>
    </recommendedName>
    <alternativeName>
        <fullName evidence="2">NADH dehydrogenase I subunit B 1</fullName>
    </alternativeName>
    <alternativeName>
        <fullName evidence="2">NDH-1 subunit B 1</fullName>
    </alternativeName>
</protein>
<name>NUOB1_CERS4</name>
<keyword id="KW-0004">4Fe-4S</keyword>
<keyword id="KW-0997">Cell inner membrane</keyword>
<keyword id="KW-1003">Cell membrane</keyword>
<keyword id="KW-0408">Iron</keyword>
<keyword id="KW-0411">Iron-sulfur</keyword>
<keyword id="KW-0472">Membrane</keyword>
<keyword id="KW-0479">Metal-binding</keyword>
<keyword id="KW-0520">NAD</keyword>
<keyword id="KW-0874">Quinone</keyword>
<keyword id="KW-1185">Reference proteome</keyword>
<keyword id="KW-1278">Translocase</keyword>
<keyword id="KW-0813">Transport</keyword>
<keyword id="KW-0830">Ubiquinone</keyword>
<organism>
    <name type="scientific">Cereibacter sphaeroides (strain ATCC 17023 / DSM 158 / JCM 6121 / CCUG 31486 / LMG 2827 / NBRC 12203 / NCIMB 8253 / ATH 2.4.1.)</name>
    <name type="common">Rhodobacter sphaeroides</name>
    <dbReference type="NCBI Taxonomy" id="272943"/>
    <lineage>
        <taxon>Bacteria</taxon>
        <taxon>Pseudomonadati</taxon>
        <taxon>Pseudomonadota</taxon>
        <taxon>Alphaproteobacteria</taxon>
        <taxon>Rhodobacterales</taxon>
        <taxon>Paracoccaceae</taxon>
        <taxon>Cereibacter</taxon>
    </lineage>
</organism>
<comment type="function">
    <text evidence="1">NDH-1 shuttles electrons from NADH, via FMN and iron-sulfur (Fe-S) centers, to quinones in the respiratory chain. Couples the redox reaction to proton translocation (for every two electrons transferred, four hydrogen ions are translocated across the cytoplasmic membrane), and thus conserves the redox energy in a proton gradient (By similarity).</text>
</comment>
<comment type="catalytic activity">
    <reaction evidence="2">
        <text>a quinone + NADH + 5 H(+)(in) = a quinol + NAD(+) + 4 H(+)(out)</text>
        <dbReference type="Rhea" id="RHEA:57888"/>
        <dbReference type="ChEBI" id="CHEBI:15378"/>
        <dbReference type="ChEBI" id="CHEBI:24646"/>
        <dbReference type="ChEBI" id="CHEBI:57540"/>
        <dbReference type="ChEBI" id="CHEBI:57945"/>
        <dbReference type="ChEBI" id="CHEBI:132124"/>
    </reaction>
</comment>
<comment type="cofactor">
    <cofactor evidence="2">
        <name>[4Fe-4S] cluster</name>
        <dbReference type="ChEBI" id="CHEBI:49883"/>
    </cofactor>
    <text evidence="2">Binds 1 [4Fe-4S] cluster.</text>
</comment>
<comment type="subunit">
    <text evidence="2">NDH-1 is composed of 14 different subunits. Subunits NuoB, C, D, E, F, and G constitute the peripheral sector of the complex.</text>
</comment>
<comment type="subcellular location">
    <subcellularLocation>
        <location evidence="2">Cell inner membrane</location>
        <topology evidence="2">Peripheral membrane protein</topology>
        <orientation evidence="2">Cytoplasmic side</orientation>
    </subcellularLocation>
</comment>
<comment type="similarity">
    <text evidence="2">Belongs to the complex I 20 kDa subunit family.</text>
</comment>